<comment type="catalytic activity">
    <reaction evidence="1">
        <text>D-arabinose 5-phosphate + phosphoenolpyruvate + H2O = 3-deoxy-alpha-D-manno-2-octulosonate-8-phosphate + phosphate</text>
        <dbReference type="Rhea" id="RHEA:14053"/>
        <dbReference type="ChEBI" id="CHEBI:15377"/>
        <dbReference type="ChEBI" id="CHEBI:43474"/>
        <dbReference type="ChEBI" id="CHEBI:57693"/>
        <dbReference type="ChEBI" id="CHEBI:58702"/>
        <dbReference type="ChEBI" id="CHEBI:85985"/>
        <dbReference type="EC" id="2.5.1.55"/>
    </reaction>
</comment>
<comment type="pathway">
    <text evidence="1">Carbohydrate biosynthesis; 3-deoxy-D-manno-octulosonate biosynthesis; 3-deoxy-D-manno-octulosonate from D-ribulose 5-phosphate: step 2/3.</text>
</comment>
<comment type="pathway">
    <text evidence="1">Bacterial outer membrane biogenesis; lipopolysaccharide biosynthesis.</text>
</comment>
<comment type="subcellular location">
    <subcellularLocation>
        <location evidence="1">Cytoplasm</location>
    </subcellularLocation>
</comment>
<comment type="similarity">
    <text evidence="1">Belongs to the KdsA family.</text>
</comment>
<organism>
    <name type="scientific">Geobacter sulfurreducens (strain ATCC 51573 / DSM 12127 / PCA)</name>
    <dbReference type="NCBI Taxonomy" id="243231"/>
    <lineage>
        <taxon>Bacteria</taxon>
        <taxon>Pseudomonadati</taxon>
        <taxon>Thermodesulfobacteriota</taxon>
        <taxon>Desulfuromonadia</taxon>
        <taxon>Geobacterales</taxon>
        <taxon>Geobacteraceae</taxon>
        <taxon>Geobacter</taxon>
    </lineage>
</organism>
<evidence type="ECO:0000255" key="1">
    <source>
        <dbReference type="HAMAP-Rule" id="MF_00056"/>
    </source>
</evidence>
<proteinExistence type="inferred from homology"/>
<name>KDSA_GEOSL</name>
<keyword id="KW-0963">Cytoplasm</keyword>
<keyword id="KW-0448">Lipopolysaccharide biosynthesis</keyword>
<keyword id="KW-1185">Reference proteome</keyword>
<keyword id="KW-0808">Transferase</keyword>
<sequence>MTREITIGSVKIGGDRPLVLIAGPCVIENEAATLRCAERLMTICNGVSVSLVFKASYDKANRTSVTSFRGPGMQEGLRILQKVKDSLGIPVISDIHSIEQVKPAAEVLDIIQVPAFLCRQTDLVVEVGRTNRVVNVKKGQFMAPWDMENVVGKILSTGNERIILTERGVTFGYNNLVSDMRSLPIMRRIGFPVVFDATHSVQLPGGQGGSSGGQREFVEYLSRAAVATGIDGIFMEVHEDPEKALCDGPNSVKLDDLPALLKKLKAIDAIVK</sequence>
<accession>P61655</accession>
<dbReference type="EC" id="2.5.1.55" evidence="1"/>
<dbReference type="EMBL" id="AE017180">
    <property type="protein sequence ID" value="AAR35270.1"/>
    <property type="molecule type" value="Genomic_DNA"/>
</dbReference>
<dbReference type="RefSeq" id="NP_952943.1">
    <property type="nucleotide sequence ID" value="NC_002939.5"/>
</dbReference>
<dbReference type="RefSeq" id="WP_010942539.1">
    <property type="nucleotide sequence ID" value="NC_002939.5"/>
</dbReference>
<dbReference type="SMR" id="P61655"/>
<dbReference type="FunCoup" id="P61655">
    <property type="interactions" value="413"/>
</dbReference>
<dbReference type="STRING" id="243231.GSU1894"/>
<dbReference type="EnsemblBacteria" id="AAR35270">
    <property type="protein sequence ID" value="AAR35270"/>
    <property type="gene ID" value="GSU1894"/>
</dbReference>
<dbReference type="KEGG" id="gsu:GSU1894"/>
<dbReference type="PATRIC" id="fig|243231.5.peg.1932"/>
<dbReference type="eggNOG" id="COG2877">
    <property type="taxonomic scope" value="Bacteria"/>
</dbReference>
<dbReference type="HOGENOM" id="CLU_036666_0_0_7"/>
<dbReference type="InParanoid" id="P61655"/>
<dbReference type="OrthoDB" id="9802281at2"/>
<dbReference type="UniPathway" id="UPA00030"/>
<dbReference type="UniPathway" id="UPA00357">
    <property type="reaction ID" value="UER00474"/>
</dbReference>
<dbReference type="Proteomes" id="UP000000577">
    <property type="component" value="Chromosome"/>
</dbReference>
<dbReference type="GO" id="GO:0005829">
    <property type="term" value="C:cytosol"/>
    <property type="evidence" value="ECO:0000318"/>
    <property type="project" value="GO_Central"/>
</dbReference>
<dbReference type="GO" id="GO:0008676">
    <property type="term" value="F:3-deoxy-8-phosphooctulonate synthase activity"/>
    <property type="evidence" value="ECO:0000318"/>
    <property type="project" value="GO_Central"/>
</dbReference>
<dbReference type="GO" id="GO:0019294">
    <property type="term" value="P:keto-3-deoxy-D-manno-octulosonic acid biosynthetic process"/>
    <property type="evidence" value="ECO:0000318"/>
    <property type="project" value="GO_Central"/>
</dbReference>
<dbReference type="Gene3D" id="3.20.20.70">
    <property type="entry name" value="Aldolase class I"/>
    <property type="match status" value="1"/>
</dbReference>
<dbReference type="HAMAP" id="MF_00056">
    <property type="entry name" value="KDO8P_synth"/>
    <property type="match status" value="1"/>
</dbReference>
<dbReference type="InterPro" id="IPR013785">
    <property type="entry name" value="Aldolase_TIM"/>
</dbReference>
<dbReference type="InterPro" id="IPR006218">
    <property type="entry name" value="DAHP1/KDSA"/>
</dbReference>
<dbReference type="InterPro" id="IPR006269">
    <property type="entry name" value="KDO8P_synthase"/>
</dbReference>
<dbReference type="NCBIfam" id="TIGR01362">
    <property type="entry name" value="KDO8P_synth"/>
    <property type="match status" value="1"/>
</dbReference>
<dbReference type="NCBIfam" id="NF003543">
    <property type="entry name" value="PRK05198.1"/>
    <property type="match status" value="1"/>
</dbReference>
<dbReference type="PANTHER" id="PTHR21057">
    <property type="entry name" value="PHOSPHO-2-DEHYDRO-3-DEOXYHEPTONATE ALDOLASE"/>
    <property type="match status" value="1"/>
</dbReference>
<dbReference type="Pfam" id="PF00793">
    <property type="entry name" value="DAHP_synth_1"/>
    <property type="match status" value="1"/>
</dbReference>
<dbReference type="SUPFAM" id="SSF51569">
    <property type="entry name" value="Aldolase"/>
    <property type="match status" value="1"/>
</dbReference>
<gene>
    <name evidence="1" type="primary">kdsA</name>
    <name type="ordered locus">GSU1894</name>
</gene>
<reference key="1">
    <citation type="journal article" date="2003" name="Science">
        <title>Genome of Geobacter sulfurreducens: metal reduction in subsurface environments.</title>
        <authorList>
            <person name="Methe B.A."/>
            <person name="Nelson K.E."/>
            <person name="Eisen J.A."/>
            <person name="Paulsen I.T."/>
            <person name="Nelson W.C."/>
            <person name="Heidelberg J.F."/>
            <person name="Wu D."/>
            <person name="Wu M."/>
            <person name="Ward N.L."/>
            <person name="Beanan M.J."/>
            <person name="Dodson R.J."/>
            <person name="Madupu R."/>
            <person name="Brinkac L.M."/>
            <person name="Daugherty S.C."/>
            <person name="DeBoy R.T."/>
            <person name="Durkin A.S."/>
            <person name="Gwinn M.L."/>
            <person name="Kolonay J.F."/>
            <person name="Sullivan S.A."/>
            <person name="Haft D.H."/>
            <person name="Selengut J."/>
            <person name="Davidsen T.M."/>
            <person name="Zafar N."/>
            <person name="White O."/>
            <person name="Tran B."/>
            <person name="Romero C."/>
            <person name="Forberger H.A."/>
            <person name="Weidman J.F."/>
            <person name="Khouri H.M."/>
            <person name="Feldblyum T.V."/>
            <person name="Utterback T.R."/>
            <person name="Van Aken S.E."/>
            <person name="Lovley D.R."/>
            <person name="Fraser C.M."/>
        </authorList>
    </citation>
    <scope>NUCLEOTIDE SEQUENCE [LARGE SCALE GENOMIC DNA]</scope>
    <source>
        <strain>ATCC 51573 / DSM 12127 / PCA</strain>
    </source>
</reference>
<protein>
    <recommendedName>
        <fullName evidence="1">2-dehydro-3-deoxyphosphooctonate aldolase</fullName>
        <ecNumber evidence="1">2.5.1.55</ecNumber>
    </recommendedName>
    <alternativeName>
        <fullName evidence="1">3-deoxy-D-manno-octulosonic acid 8-phosphate synthase</fullName>
    </alternativeName>
    <alternativeName>
        <fullName evidence="1">KDO-8-phosphate synthase</fullName>
        <shortName evidence="1">KDO 8-P synthase</shortName>
        <shortName evidence="1">KDOPS</shortName>
    </alternativeName>
    <alternativeName>
        <fullName evidence="1">Phospho-2-dehydro-3-deoxyoctonate aldolase</fullName>
    </alternativeName>
</protein>
<feature type="chain" id="PRO_0000187129" description="2-dehydro-3-deoxyphosphooctonate aldolase">
    <location>
        <begin position="1"/>
        <end position="272"/>
    </location>
</feature>